<gene>
    <name evidence="1" type="primary">mnmC</name>
    <name type="ordered locus">Bpro_2343</name>
</gene>
<evidence type="ECO:0000255" key="1">
    <source>
        <dbReference type="HAMAP-Rule" id="MF_01102"/>
    </source>
</evidence>
<comment type="function">
    <text evidence="1">Catalyzes the last two steps in the biosynthesis of 5-methylaminomethyl-2-thiouridine (mnm(5)s(2)U) at the wobble position (U34) in tRNA. Catalyzes the FAD-dependent demodification of cmnm(5)s(2)U34 to nm(5)s(2)U34, followed by the transfer of a methyl group from S-adenosyl-L-methionine to nm(5)s(2)U34, to form mnm(5)s(2)U34.</text>
</comment>
<comment type="catalytic activity">
    <reaction evidence="1">
        <text>5-aminomethyl-2-thiouridine(34) in tRNA + S-adenosyl-L-methionine = 5-methylaminomethyl-2-thiouridine(34) in tRNA + S-adenosyl-L-homocysteine + H(+)</text>
        <dbReference type="Rhea" id="RHEA:19569"/>
        <dbReference type="Rhea" id="RHEA-COMP:10195"/>
        <dbReference type="Rhea" id="RHEA-COMP:10197"/>
        <dbReference type="ChEBI" id="CHEBI:15378"/>
        <dbReference type="ChEBI" id="CHEBI:57856"/>
        <dbReference type="ChEBI" id="CHEBI:59789"/>
        <dbReference type="ChEBI" id="CHEBI:74454"/>
        <dbReference type="ChEBI" id="CHEBI:74455"/>
        <dbReference type="EC" id="2.1.1.61"/>
    </reaction>
</comment>
<comment type="cofactor">
    <cofactor evidence="1">
        <name>FAD</name>
        <dbReference type="ChEBI" id="CHEBI:57692"/>
    </cofactor>
</comment>
<comment type="subcellular location">
    <subcellularLocation>
        <location evidence="1">Cytoplasm</location>
    </subcellularLocation>
</comment>
<comment type="similarity">
    <text evidence="1">In the N-terminal section; belongs to the methyltransferase superfamily. tRNA (mnm(5)s(2)U34)-methyltransferase family.</text>
</comment>
<comment type="similarity">
    <text evidence="1">In the C-terminal section; belongs to the DAO family.</text>
</comment>
<dbReference type="EC" id="2.1.1.61" evidence="1"/>
<dbReference type="EC" id="1.5.-.-" evidence="1"/>
<dbReference type="EMBL" id="CP000316">
    <property type="protein sequence ID" value="ABE44266.1"/>
    <property type="molecule type" value="Genomic_DNA"/>
</dbReference>
<dbReference type="RefSeq" id="WP_011483264.1">
    <property type="nucleotide sequence ID" value="NC_007948.1"/>
</dbReference>
<dbReference type="SMR" id="Q12B26"/>
<dbReference type="STRING" id="296591.Bpro_2343"/>
<dbReference type="KEGG" id="pol:Bpro_2343"/>
<dbReference type="eggNOG" id="COG0665">
    <property type="taxonomic scope" value="Bacteria"/>
</dbReference>
<dbReference type="eggNOG" id="COG4121">
    <property type="taxonomic scope" value="Bacteria"/>
</dbReference>
<dbReference type="HOGENOM" id="CLU_022427_1_0_4"/>
<dbReference type="OrthoDB" id="9786494at2"/>
<dbReference type="Proteomes" id="UP000001983">
    <property type="component" value="Chromosome"/>
</dbReference>
<dbReference type="GO" id="GO:0005737">
    <property type="term" value="C:cytoplasm"/>
    <property type="evidence" value="ECO:0007669"/>
    <property type="project" value="UniProtKB-SubCell"/>
</dbReference>
<dbReference type="GO" id="GO:0050660">
    <property type="term" value="F:flavin adenine dinucleotide binding"/>
    <property type="evidence" value="ECO:0007669"/>
    <property type="project" value="UniProtKB-UniRule"/>
</dbReference>
<dbReference type="GO" id="GO:0016645">
    <property type="term" value="F:oxidoreductase activity, acting on the CH-NH group of donors"/>
    <property type="evidence" value="ECO:0007669"/>
    <property type="project" value="InterPro"/>
</dbReference>
<dbReference type="GO" id="GO:0004808">
    <property type="term" value="F:tRNA (5-methylaminomethyl-2-thiouridylate)(34)-methyltransferase activity"/>
    <property type="evidence" value="ECO:0007669"/>
    <property type="project" value="UniProtKB-EC"/>
</dbReference>
<dbReference type="GO" id="GO:0032259">
    <property type="term" value="P:methylation"/>
    <property type="evidence" value="ECO:0007669"/>
    <property type="project" value="UniProtKB-KW"/>
</dbReference>
<dbReference type="GO" id="GO:0002097">
    <property type="term" value="P:tRNA wobble base modification"/>
    <property type="evidence" value="ECO:0007669"/>
    <property type="project" value="UniProtKB-UniRule"/>
</dbReference>
<dbReference type="Gene3D" id="3.30.9.10">
    <property type="entry name" value="D-Amino Acid Oxidase, subunit A, domain 2"/>
    <property type="match status" value="1"/>
</dbReference>
<dbReference type="Gene3D" id="3.50.50.60">
    <property type="entry name" value="FAD/NAD(P)-binding domain"/>
    <property type="match status" value="1"/>
</dbReference>
<dbReference type="Gene3D" id="3.40.50.150">
    <property type="entry name" value="Vaccinia Virus protein VP39"/>
    <property type="match status" value="1"/>
</dbReference>
<dbReference type="HAMAP" id="MF_01102">
    <property type="entry name" value="MnmC"/>
    <property type="match status" value="1"/>
</dbReference>
<dbReference type="InterPro" id="IPR006076">
    <property type="entry name" value="FAD-dep_OxRdtase"/>
</dbReference>
<dbReference type="InterPro" id="IPR036188">
    <property type="entry name" value="FAD/NAD-bd_sf"/>
</dbReference>
<dbReference type="InterPro" id="IPR008471">
    <property type="entry name" value="MnmC-like_methylTransf"/>
</dbReference>
<dbReference type="InterPro" id="IPR029063">
    <property type="entry name" value="SAM-dependent_MTases_sf"/>
</dbReference>
<dbReference type="InterPro" id="IPR023032">
    <property type="entry name" value="tRNA_MAMT_biosynth_bifunc_MnmC"/>
</dbReference>
<dbReference type="InterPro" id="IPR047785">
    <property type="entry name" value="tRNA_MNMC2"/>
</dbReference>
<dbReference type="InterPro" id="IPR017610">
    <property type="entry name" value="tRNA_S-uridine_synth_MnmC_C"/>
</dbReference>
<dbReference type="NCBIfam" id="TIGR03197">
    <property type="entry name" value="MnmC_Cterm"/>
    <property type="match status" value="1"/>
</dbReference>
<dbReference type="NCBIfam" id="NF033855">
    <property type="entry name" value="tRNA_MNMC2"/>
    <property type="match status" value="1"/>
</dbReference>
<dbReference type="PANTHER" id="PTHR13847">
    <property type="entry name" value="SARCOSINE DEHYDROGENASE-RELATED"/>
    <property type="match status" value="1"/>
</dbReference>
<dbReference type="PANTHER" id="PTHR13847:SF283">
    <property type="entry name" value="TRNA 5-METHYLAMINOMETHYL-2-THIOURIDINE BIOSYNTHESIS BIFUNCTIONAL PROTEIN MNMC"/>
    <property type="match status" value="1"/>
</dbReference>
<dbReference type="Pfam" id="PF01266">
    <property type="entry name" value="DAO"/>
    <property type="match status" value="1"/>
</dbReference>
<dbReference type="Pfam" id="PF05430">
    <property type="entry name" value="Methyltransf_30"/>
    <property type="match status" value="1"/>
</dbReference>
<dbReference type="SUPFAM" id="SSF51905">
    <property type="entry name" value="FAD/NAD(P)-binding domain"/>
    <property type="match status" value="1"/>
</dbReference>
<organism>
    <name type="scientific">Polaromonas sp. (strain JS666 / ATCC BAA-500)</name>
    <dbReference type="NCBI Taxonomy" id="296591"/>
    <lineage>
        <taxon>Bacteria</taxon>
        <taxon>Pseudomonadati</taxon>
        <taxon>Pseudomonadota</taxon>
        <taxon>Betaproteobacteria</taxon>
        <taxon>Burkholderiales</taxon>
        <taxon>Comamonadaceae</taxon>
        <taxon>Polaromonas</taxon>
    </lineage>
</organism>
<sequence>MPERIEWLEDGTPYSPRFGDRYRSESGGLDQAREVFLKGCGLPAAWAGQPQWCVLETGFGLGLNFLVTWQAWKTDPLRPRLLHFVSTEAFPASAADVLRSVQVHPELLPLARQLHDQLWGLLPGFHRLVFEEGRVMLTLCIGDAKAMLREQSFEADSVYLDGFNPGLKPADSPDIWDLHTFKAVARCCRRGTRVATWTVARSVRDALAQCGFVVKKTPGIPPKRDNLQGEFNPAWEPKKSMLPGIRRQAGSCVVIGAGLAGAAVAASLARRGWRVVVLDAADAPARGASGLPAGVLAPHVSPDDSLLSRLSRSGVRATLQQAHALLDAGTDWNPTGVLEHCVDHARKLPAAWQSDWAEAAQDWTCLATSGQLAHCRLPASAPALWHVRAGWIKPASLVQAWLTTPGVEFHDHASVGQLIRQPDSWQVLDANGHVLACAELVVLAAGYASRALAEAAVPPTSPPLALQAIRGQVSWALHPPGAADALPAFPVNGHGSLIPALPLSGNANELAWVTGSTFERDNALNDLKPEDDSHNLDRLRTLLPDVAPGLTGQLEMGQVKAWAGVRCATPSRLPALGPLAAPNLWVCSGMGSRGLTFAALCAELLAARLHAEPLPLEQRLAEALRPQYGEAKLVSED</sequence>
<feature type="chain" id="PRO_0000348008" description="tRNA 5-methylaminomethyl-2-thiouridine biosynthesis bifunctional protein MnmC">
    <location>
        <begin position="1"/>
        <end position="637"/>
    </location>
</feature>
<feature type="region of interest" description="tRNA (mnm(5)s(2)U34)-methyltransferase">
    <location>
        <begin position="1"/>
        <end position="232"/>
    </location>
</feature>
<feature type="region of interest" description="FAD-dependent cmnm(5)s(2)U34 oxidoreductase">
    <location>
        <begin position="255"/>
        <end position="637"/>
    </location>
</feature>
<protein>
    <recommendedName>
        <fullName evidence="1">tRNA 5-methylaminomethyl-2-thiouridine biosynthesis bifunctional protein MnmC</fullName>
        <shortName evidence="1">tRNA mnm(5)s(2)U biosynthesis bifunctional protein</shortName>
    </recommendedName>
    <domain>
        <recommendedName>
            <fullName evidence="1">tRNA (mnm(5)s(2)U34)-methyltransferase</fullName>
            <ecNumber evidence="1">2.1.1.61</ecNumber>
        </recommendedName>
    </domain>
    <domain>
        <recommendedName>
            <fullName evidence="1">FAD-dependent cmnm(5)s(2)U34 oxidoreductase</fullName>
            <ecNumber evidence="1">1.5.-.-</ecNumber>
        </recommendedName>
    </domain>
</protein>
<name>MNMC_POLSJ</name>
<accession>Q12B26</accession>
<proteinExistence type="inferred from homology"/>
<reference key="1">
    <citation type="journal article" date="2008" name="Appl. Environ. Microbiol.">
        <title>The genome of Polaromonas sp. strain JS666: insights into the evolution of a hydrocarbon- and xenobiotic-degrading bacterium, and features of relevance to biotechnology.</title>
        <authorList>
            <person name="Mattes T.E."/>
            <person name="Alexander A.K."/>
            <person name="Richardson P.M."/>
            <person name="Munk A.C."/>
            <person name="Han C.S."/>
            <person name="Stothard P."/>
            <person name="Coleman N.V."/>
        </authorList>
    </citation>
    <scope>NUCLEOTIDE SEQUENCE [LARGE SCALE GENOMIC DNA]</scope>
    <source>
        <strain>JS666 / ATCC BAA-500</strain>
    </source>
</reference>
<keyword id="KW-0963">Cytoplasm</keyword>
<keyword id="KW-0274">FAD</keyword>
<keyword id="KW-0285">Flavoprotein</keyword>
<keyword id="KW-0489">Methyltransferase</keyword>
<keyword id="KW-0511">Multifunctional enzyme</keyword>
<keyword id="KW-0560">Oxidoreductase</keyword>
<keyword id="KW-1185">Reference proteome</keyword>
<keyword id="KW-0949">S-adenosyl-L-methionine</keyword>
<keyword id="KW-0808">Transferase</keyword>
<keyword id="KW-0819">tRNA processing</keyword>